<protein>
    <recommendedName>
        <fullName>Probable lysophospholipase 4</fullName>
        <ecNumber>3.1.1.5</ecNumber>
    </recommendedName>
    <alternativeName>
        <fullName>Phospholipase B</fullName>
    </alternativeName>
</protein>
<reference key="1">
    <citation type="journal article" date="2002" name="Nature">
        <title>The genome sequence of Schizosaccharomyces pombe.</title>
        <authorList>
            <person name="Wood V."/>
            <person name="Gwilliam R."/>
            <person name="Rajandream M.A."/>
            <person name="Lyne M.H."/>
            <person name="Lyne R."/>
            <person name="Stewart A."/>
            <person name="Sgouros J.G."/>
            <person name="Peat N."/>
            <person name="Hayles J."/>
            <person name="Baker S.G."/>
            <person name="Basham D."/>
            <person name="Bowman S."/>
            <person name="Brooks K."/>
            <person name="Brown D."/>
            <person name="Brown S."/>
            <person name="Chillingworth T."/>
            <person name="Churcher C.M."/>
            <person name="Collins M."/>
            <person name="Connor R."/>
            <person name="Cronin A."/>
            <person name="Davis P."/>
            <person name="Feltwell T."/>
            <person name="Fraser A."/>
            <person name="Gentles S."/>
            <person name="Goble A."/>
            <person name="Hamlin N."/>
            <person name="Harris D.E."/>
            <person name="Hidalgo J."/>
            <person name="Hodgson G."/>
            <person name="Holroyd S."/>
            <person name="Hornsby T."/>
            <person name="Howarth S."/>
            <person name="Huckle E.J."/>
            <person name="Hunt S."/>
            <person name="Jagels K."/>
            <person name="James K.D."/>
            <person name="Jones L."/>
            <person name="Jones M."/>
            <person name="Leather S."/>
            <person name="McDonald S."/>
            <person name="McLean J."/>
            <person name="Mooney P."/>
            <person name="Moule S."/>
            <person name="Mungall K.L."/>
            <person name="Murphy L.D."/>
            <person name="Niblett D."/>
            <person name="Odell C."/>
            <person name="Oliver K."/>
            <person name="O'Neil S."/>
            <person name="Pearson D."/>
            <person name="Quail M.A."/>
            <person name="Rabbinowitsch E."/>
            <person name="Rutherford K.M."/>
            <person name="Rutter S."/>
            <person name="Saunders D."/>
            <person name="Seeger K."/>
            <person name="Sharp S."/>
            <person name="Skelton J."/>
            <person name="Simmonds M.N."/>
            <person name="Squares R."/>
            <person name="Squares S."/>
            <person name="Stevens K."/>
            <person name="Taylor K."/>
            <person name="Taylor R.G."/>
            <person name="Tivey A."/>
            <person name="Walsh S.V."/>
            <person name="Warren T."/>
            <person name="Whitehead S."/>
            <person name="Woodward J.R."/>
            <person name="Volckaert G."/>
            <person name="Aert R."/>
            <person name="Robben J."/>
            <person name="Grymonprez B."/>
            <person name="Weltjens I."/>
            <person name="Vanstreels E."/>
            <person name="Rieger M."/>
            <person name="Schaefer M."/>
            <person name="Mueller-Auer S."/>
            <person name="Gabel C."/>
            <person name="Fuchs M."/>
            <person name="Duesterhoeft A."/>
            <person name="Fritzc C."/>
            <person name="Holzer E."/>
            <person name="Moestl D."/>
            <person name="Hilbert H."/>
            <person name="Borzym K."/>
            <person name="Langer I."/>
            <person name="Beck A."/>
            <person name="Lehrach H."/>
            <person name="Reinhardt R."/>
            <person name="Pohl T.M."/>
            <person name="Eger P."/>
            <person name="Zimmermann W."/>
            <person name="Wedler H."/>
            <person name="Wambutt R."/>
            <person name="Purnelle B."/>
            <person name="Goffeau A."/>
            <person name="Cadieu E."/>
            <person name="Dreano S."/>
            <person name="Gloux S."/>
            <person name="Lelaure V."/>
            <person name="Mottier S."/>
            <person name="Galibert F."/>
            <person name="Aves S.J."/>
            <person name="Xiang Z."/>
            <person name="Hunt C."/>
            <person name="Moore K."/>
            <person name="Hurst S.M."/>
            <person name="Lucas M."/>
            <person name="Rochet M."/>
            <person name="Gaillardin C."/>
            <person name="Tallada V.A."/>
            <person name="Garzon A."/>
            <person name="Thode G."/>
            <person name="Daga R.R."/>
            <person name="Cruzado L."/>
            <person name="Jimenez J."/>
            <person name="Sanchez M."/>
            <person name="del Rey F."/>
            <person name="Benito J."/>
            <person name="Dominguez A."/>
            <person name="Revuelta J.L."/>
            <person name="Moreno S."/>
            <person name="Armstrong J."/>
            <person name="Forsburg S.L."/>
            <person name="Cerutti L."/>
            <person name="Lowe T."/>
            <person name="McCombie W.R."/>
            <person name="Paulsen I."/>
            <person name="Potashkin J."/>
            <person name="Shpakovski G.V."/>
            <person name="Ussery D."/>
            <person name="Barrell B.G."/>
            <person name="Nurse P."/>
        </authorList>
    </citation>
    <scope>NUCLEOTIDE SEQUENCE [LARGE SCALE GENOMIC DNA]</scope>
    <source>
        <strain>972 / ATCC 24843</strain>
    </source>
</reference>
<reference key="2">
    <citation type="journal article" date="1997" name="DNA Res.">
        <title>Identification of open reading frames in Schizosaccharomyces pombe cDNAs.</title>
        <authorList>
            <person name="Yoshioka S."/>
            <person name="Kato K."/>
            <person name="Nakai K."/>
            <person name="Okayama H."/>
            <person name="Nojima H."/>
        </authorList>
    </citation>
    <scope>NUCLEOTIDE SEQUENCE [LARGE SCALE MRNA] OF 427-673</scope>
    <source>
        <strain>PR745</strain>
    </source>
</reference>
<evidence type="ECO:0000250" key="1"/>
<evidence type="ECO:0000255" key="2"/>
<evidence type="ECO:0000255" key="3">
    <source>
        <dbReference type="PROSITE-ProRule" id="PRU00555"/>
    </source>
</evidence>
<evidence type="ECO:0000256" key="4">
    <source>
        <dbReference type="SAM" id="MobiDB-lite"/>
    </source>
</evidence>
<evidence type="ECO:0000305" key="5"/>
<evidence type="ECO:0000312" key="6">
    <source>
        <dbReference type="PomBase" id="SPAC977.09c"/>
    </source>
</evidence>
<gene>
    <name type="primary">plb4</name>
    <name evidence="6" type="ORF">SPAC977.09c</name>
</gene>
<accession>P0CU02</accession>
<accession>P78834</accession>
<accession>Q9P327</accession>
<comment type="function">
    <text evidence="1">Catalyzes the release of fatty acids from lysophospholipids.</text>
</comment>
<comment type="catalytic activity">
    <reaction>
        <text>a 1-acyl-sn-glycero-3-phosphocholine + H2O = sn-glycerol 3-phosphocholine + a fatty acid + H(+)</text>
        <dbReference type="Rhea" id="RHEA:15177"/>
        <dbReference type="ChEBI" id="CHEBI:15377"/>
        <dbReference type="ChEBI" id="CHEBI:15378"/>
        <dbReference type="ChEBI" id="CHEBI:16870"/>
        <dbReference type="ChEBI" id="CHEBI:28868"/>
        <dbReference type="ChEBI" id="CHEBI:58168"/>
        <dbReference type="EC" id="3.1.1.5"/>
    </reaction>
</comment>
<comment type="subcellular location">
    <subcellularLocation>
        <location evidence="5">Secreted</location>
    </subcellularLocation>
</comment>
<comment type="similarity">
    <text evidence="5">Belongs to the lysophospholipase family.</text>
</comment>
<keyword id="KW-0325">Glycoprotein</keyword>
<keyword id="KW-0378">Hydrolase</keyword>
<keyword id="KW-0442">Lipid degradation</keyword>
<keyword id="KW-0443">Lipid metabolism</keyword>
<keyword id="KW-1185">Reference proteome</keyword>
<keyword id="KW-0964">Secreted</keyword>
<keyword id="KW-0732">Signal</keyword>
<proteinExistence type="evidence at transcript level"/>
<dbReference type="EC" id="3.1.1.5"/>
<dbReference type="EMBL" id="CU329670">
    <property type="protein sequence ID" value="CAB69631.1"/>
    <property type="molecule type" value="Genomic_DNA"/>
</dbReference>
<dbReference type="EMBL" id="D89183">
    <property type="protein sequence ID" value="BAA13845.1"/>
    <property type="molecule type" value="mRNA"/>
</dbReference>
<dbReference type="PIR" id="T50281">
    <property type="entry name" value="T50281"/>
</dbReference>
<dbReference type="RefSeq" id="NP_592772.1">
    <property type="nucleotide sequence ID" value="NM_001020935.2"/>
</dbReference>
<dbReference type="RefSeq" id="NP_592781.1">
    <property type="nucleotide sequence ID" value="NM_001018181.2"/>
</dbReference>
<dbReference type="SMR" id="P0CU02"/>
<dbReference type="FunCoup" id="P0CU02">
    <property type="interactions" value="202"/>
</dbReference>
<dbReference type="STRING" id="284812.P0CU02"/>
<dbReference type="iPTMnet" id="P0CU02"/>
<dbReference type="PaxDb" id="4896-SPAC977.09c.1"/>
<dbReference type="EnsemblFungi" id="SPAC977.09c.1">
    <property type="protein sequence ID" value="SPAC977.09c.1:pep"/>
    <property type="gene ID" value="SPAC977.09c"/>
</dbReference>
<dbReference type="EnsemblFungi" id="SPBC1348.10c.1">
    <property type="protein sequence ID" value="SPBC1348.10c.1:pep"/>
    <property type="gene ID" value="SPBC1348.10c"/>
</dbReference>
<dbReference type="GeneID" id="2541836"/>
<dbReference type="KEGG" id="spo:2541836"/>
<dbReference type="KEGG" id="spo:5802732"/>
<dbReference type="PomBase" id="SPAC977.09c">
    <property type="gene designation" value="plb4"/>
</dbReference>
<dbReference type="VEuPathDB" id="FungiDB:SPAC977.09c"/>
<dbReference type="VEuPathDB" id="FungiDB:SPBC1348.10c"/>
<dbReference type="eggNOG" id="KOG1325">
    <property type="taxonomic scope" value="Eukaryota"/>
</dbReference>
<dbReference type="InParanoid" id="P0CU02"/>
<dbReference type="OMA" id="FARYCWN"/>
<dbReference type="PhylomeDB" id="P0CU02"/>
<dbReference type="Reactome" id="R-SPO-111995">
    <property type="pathway name" value="phospho-PLA2 pathway"/>
</dbReference>
<dbReference type="Reactome" id="R-SPO-1482788">
    <property type="pathway name" value="Acyl chain remodelling of PC"/>
</dbReference>
<dbReference type="Reactome" id="R-SPO-1482798">
    <property type="pathway name" value="Acyl chain remodeling of CL"/>
</dbReference>
<dbReference type="Reactome" id="R-SPO-1482801">
    <property type="pathway name" value="Acyl chain remodelling of PS"/>
</dbReference>
<dbReference type="Reactome" id="R-SPO-1482839">
    <property type="pathway name" value="Acyl chain remodelling of PE"/>
</dbReference>
<dbReference type="Reactome" id="R-SPO-1482922">
    <property type="pathway name" value="Acyl chain remodelling of PI"/>
</dbReference>
<dbReference type="Reactome" id="R-SPO-1482925">
    <property type="pathway name" value="Acyl chain remodelling of PG"/>
</dbReference>
<dbReference type="Reactome" id="R-SPO-1483115">
    <property type="pathway name" value="Hydrolysis of LPC"/>
</dbReference>
<dbReference type="Reactome" id="R-SPO-1483152">
    <property type="pathway name" value="Hydrolysis of LPE"/>
</dbReference>
<dbReference type="Reactome" id="R-SPO-1483166">
    <property type="pathway name" value="Synthesis of PA"/>
</dbReference>
<dbReference type="Reactome" id="R-SPO-2142753">
    <property type="pathway name" value="Arachidonate metabolism"/>
</dbReference>
<dbReference type="Reactome" id="R-SPO-418592">
    <property type="pathway name" value="ADP signalling through P2Y purinoceptor 1"/>
</dbReference>
<dbReference type="Reactome" id="R-SPO-432142">
    <property type="pathway name" value="Platelet sensitization by LDL"/>
</dbReference>
<dbReference type="Reactome" id="R-SPO-6811436">
    <property type="pathway name" value="COPI-independent Golgi-to-ER retrograde traffic"/>
</dbReference>
<dbReference type="PRO" id="PR:P0CU02"/>
<dbReference type="Proteomes" id="UP000002485">
    <property type="component" value="Chromosome I"/>
</dbReference>
<dbReference type="GO" id="GO:0005829">
    <property type="term" value="C:cytosol"/>
    <property type="evidence" value="ECO:0007005"/>
    <property type="project" value="PomBase"/>
</dbReference>
<dbReference type="GO" id="GO:0005783">
    <property type="term" value="C:endoplasmic reticulum"/>
    <property type="evidence" value="ECO:0007005"/>
    <property type="project" value="PomBase"/>
</dbReference>
<dbReference type="GO" id="GO:0009897">
    <property type="term" value="C:external side of plasma membrane"/>
    <property type="evidence" value="ECO:0000305"/>
    <property type="project" value="PomBase"/>
</dbReference>
<dbReference type="GO" id="GO:0005576">
    <property type="term" value="C:extracellular region"/>
    <property type="evidence" value="ECO:0000305"/>
    <property type="project" value="PomBase"/>
</dbReference>
<dbReference type="GO" id="GO:0009277">
    <property type="term" value="C:fungal-type cell wall"/>
    <property type="evidence" value="ECO:0000250"/>
    <property type="project" value="PomBase"/>
</dbReference>
<dbReference type="GO" id="GO:0005634">
    <property type="term" value="C:nucleus"/>
    <property type="evidence" value="ECO:0007005"/>
    <property type="project" value="PomBase"/>
</dbReference>
<dbReference type="GO" id="GO:0004622">
    <property type="term" value="F:lysophospholipase activity"/>
    <property type="evidence" value="ECO:0007669"/>
    <property type="project" value="UniProtKB-EC"/>
</dbReference>
<dbReference type="GO" id="GO:0004623">
    <property type="term" value="F:phospholipase A2 activity"/>
    <property type="evidence" value="ECO:0000318"/>
    <property type="project" value="GO_Central"/>
</dbReference>
<dbReference type="GO" id="GO:0046475">
    <property type="term" value="P:glycerophospholipid catabolic process"/>
    <property type="evidence" value="ECO:0000318"/>
    <property type="project" value="GO_Central"/>
</dbReference>
<dbReference type="CDD" id="cd07203">
    <property type="entry name" value="cPLA2_Fungal_PLB"/>
    <property type="match status" value="1"/>
</dbReference>
<dbReference type="FunFam" id="3.40.1090.10:FF:000010">
    <property type="entry name" value="Lysophospholipase"/>
    <property type="match status" value="1"/>
</dbReference>
<dbReference type="Gene3D" id="3.40.1090.10">
    <property type="entry name" value="Cytosolic phospholipase A2 catalytic domain"/>
    <property type="match status" value="1"/>
</dbReference>
<dbReference type="InterPro" id="IPR016035">
    <property type="entry name" value="Acyl_Trfase/lysoPLipase"/>
</dbReference>
<dbReference type="InterPro" id="IPR002642">
    <property type="entry name" value="LysoPLipase_cat_dom"/>
</dbReference>
<dbReference type="PANTHER" id="PTHR10728">
    <property type="entry name" value="CYTOSOLIC PHOSPHOLIPASE A2"/>
    <property type="match status" value="1"/>
</dbReference>
<dbReference type="PANTHER" id="PTHR10728:SF33">
    <property type="entry name" value="LYSOPHOSPHOLIPASE 1-RELATED"/>
    <property type="match status" value="1"/>
</dbReference>
<dbReference type="Pfam" id="PF01735">
    <property type="entry name" value="PLA2_B"/>
    <property type="match status" value="1"/>
</dbReference>
<dbReference type="SMART" id="SM00022">
    <property type="entry name" value="PLAc"/>
    <property type="match status" value="1"/>
</dbReference>
<dbReference type="SUPFAM" id="SSF52151">
    <property type="entry name" value="FabD/lysophospholipase-like"/>
    <property type="match status" value="1"/>
</dbReference>
<dbReference type="PROSITE" id="PS51210">
    <property type="entry name" value="PLA2C"/>
    <property type="match status" value="1"/>
</dbReference>
<feature type="signal peptide" evidence="2">
    <location>
        <begin position="1"/>
        <end position="19"/>
    </location>
</feature>
<feature type="chain" id="PRO_0000024642" description="Probable lysophospholipase 4">
    <location>
        <begin position="20"/>
        <end position="673"/>
    </location>
</feature>
<feature type="domain" description="PLA2c" evidence="3">
    <location>
        <begin position="74"/>
        <end position="615"/>
    </location>
</feature>
<feature type="region of interest" description="Disordered" evidence="4">
    <location>
        <begin position="631"/>
        <end position="653"/>
    </location>
</feature>
<feature type="glycosylation site" description="N-linked (GlcNAc...) asparagine" evidence="2">
    <location>
        <position position="72"/>
    </location>
</feature>
<feature type="glycosylation site" description="N-linked (GlcNAc...) asparagine" evidence="2">
    <location>
        <position position="125"/>
    </location>
</feature>
<feature type="glycosylation site" description="N-linked (GlcNAc...) asparagine" evidence="2">
    <location>
        <position position="191"/>
    </location>
</feature>
<feature type="glycosylation site" description="N-linked (GlcNAc...) asparagine" evidence="2">
    <location>
        <position position="194"/>
    </location>
</feature>
<feature type="glycosylation site" description="N-linked (GlcNAc...) asparagine" evidence="2">
    <location>
        <position position="272"/>
    </location>
</feature>
<feature type="glycosylation site" description="N-linked (GlcNAc...) asparagine" evidence="2">
    <location>
        <position position="301"/>
    </location>
</feature>
<feature type="glycosylation site" description="N-linked (GlcNAc...) asparagine" evidence="2">
    <location>
        <position position="374"/>
    </location>
</feature>
<feature type="glycosylation site" description="N-linked (GlcNAc...) asparagine" evidence="2">
    <location>
        <position position="404"/>
    </location>
</feature>
<feature type="glycosylation site" description="N-linked (GlcNAc...) asparagine" evidence="2">
    <location>
        <position position="409"/>
    </location>
</feature>
<feature type="glycosylation site" description="N-linked (GlcNAc...) asparagine" evidence="2">
    <location>
        <position position="481"/>
    </location>
</feature>
<feature type="glycosylation site" description="N-linked (GlcNAc...) asparagine" evidence="2">
    <location>
        <position position="516"/>
    </location>
</feature>
<feature type="glycosylation site" description="N-linked (GlcNAc...) asparagine" evidence="2">
    <location>
        <position position="545"/>
    </location>
</feature>
<feature type="glycosylation site" description="N-linked (GlcNAc...) asparagine" evidence="2">
    <location>
        <position position="574"/>
    </location>
</feature>
<organism>
    <name type="scientific">Schizosaccharomyces pombe (strain 972 / ATCC 24843)</name>
    <name type="common">Fission yeast</name>
    <dbReference type="NCBI Taxonomy" id="284812"/>
    <lineage>
        <taxon>Eukaryota</taxon>
        <taxon>Fungi</taxon>
        <taxon>Dikarya</taxon>
        <taxon>Ascomycota</taxon>
        <taxon>Taphrinomycotina</taxon>
        <taxon>Schizosaccharomycetes</taxon>
        <taxon>Schizosaccharomycetales</taxon>
        <taxon>Schizosaccharomycetaceae</taxon>
        <taxon>Schizosaccharomyces</taxon>
    </lineage>
</organism>
<name>PLB4_SCHPO</name>
<sequence length="673" mass="74596">MYVNYIGLFAFVQISLTLAYPPGRVEISEIYDFEESSSYKGQDIDTSVLYTLSKRKPALVKRSTDASYAPFNVTCSNDNLLRPASEGLNEGEQSYINKRISKVNSELRSFISKTGLNVDLDKVVNSSDGPRLGIAFSGGGLRAMVNGGGAFNAFDSRFESDSPLSGLLQSAMYISGLSGGSWLVGSVAINNFTNITYLRDNVWNLEHSVFAPHGDNVIENLNYYNDLRKEIDQKKHAGFDCSLTDLWGRALSRKLVDAERGGPGITYSSMRNQSWFQNADYPYPIIVADSRLEEETAIPANTSIFEFTAYEFGTWDNGIKAFIPMEYVGTHLLDGVPPDKSCIHNYDNAGFVMGTSATLFNSFLLDWNENVKKNDTYYDILHAILEDLSKHQDDIAPYPNPYQNYTTSNTSVVNAFEPYDTIDLVDGGEDRENIPLWPLLHPQRFVDVVFAIDSTYNDPYGWPLGSSIVATYERVVTFNANKSVDVRGFPYIPDENTIISLGLNTRPTFFGCDGKNTTAGNHDVDNNTPPLLVYFPNYPWTYYSNISTFTMSMDDKMANGILENAFMSTTQNNNESFAVCLACAIIQRSLERKKLSTPTQCSSCFQEYCWDGTLATSTASVYDPTVMSAATTSRAPSGTTSGTASSTTSSSVASATPTHKHWWDSIFEAKENP</sequence>